<name>MIAA_PELUB</name>
<keyword id="KW-0067">ATP-binding</keyword>
<keyword id="KW-0460">Magnesium</keyword>
<keyword id="KW-0547">Nucleotide-binding</keyword>
<keyword id="KW-1185">Reference proteome</keyword>
<keyword id="KW-0808">Transferase</keyword>
<keyword id="KW-0819">tRNA processing</keyword>
<gene>
    <name evidence="1" type="primary">miaA</name>
    <name type="ordered locus">SAR11_0004</name>
</gene>
<dbReference type="EC" id="2.5.1.75" evidence="1"/>
<dbReference type="EMBL" id="CP000084">
    <property type="protein sequence ID" value="AAZ20829.1"/>
    <property type="molecule type" value="Genomic_DNA"/>
</dbReference>
<dbReference type="RefSeq" id="WP_011281401.1">
    <property type="nucleotide sequence ID" value="NC_007205.1"/>
</dbReference>
<dbReference type="SMR" id="Q4FPN1"/>
<dbReference type="STRING" id="335992.SAR11_0004"/>
<dbReference type="GeneID" id="66294507"/>
<dbReference type="KEGG" id="pub:SAR11_0004"/>
<dbReference type="eggNOG" id="COG0324">
    <property type="taxonomic scope" value="Bacteria"/>
</dbReference>
<dbReference type="HOGENOM" id="CLU_032616_0_1_5"/>
<dbReference type="OrthoDB" id="9776390at2"/>
<dbReference type="Proteomes" id="UP000002528">
    <property type="component" value="Chromosome"/>
</dbReference>
<dbReference type="GO" id="GO:0005524">
    <property type="term" value="F:ATP binding"/>
    <property type="evidence" value="ECO:0007669"/>
    <property type="project" value="UniProtKB-UniRule"/>
</dbReference>
<dbReference type="GO" id="GO:0052381">
    <property type="term" value="F:tRNA dimethylallyltransferase activity"/>
    <property type="evidence" value="ECO:0007669"/>
    <property type="project" value="UniProtKB-UniRule"/>
</dbReference>
<dbReference type="GO" id="GO:0006400">
    <property type="term" value="P:tRNA modification"/>
    <property type="evidence" value="ECO:0007669"/>
    <property type="project" value="TreeGrafter"/>
</dbReference>
<dbReference type="Gene3D" id="1.10.20.140">
    <property type="match status" value="1"/>
</dbReference>
<dbReference type="Gene3D" id="3.40.50.300">
    <property type="entry name" value="P-loop containing nucleotide triphosphate hydrolases"/>
    <property type="match status" value="1"/>
</dbReference>
<dbReference type="HAMAP" id="MF_00185">
    <property type="entry name" value="IPP_trans"/>
    <property type="match status" value="1"/>
</dbReference>
<dbReference type="InterPro" id="IPR039657">
    <property type="entry name" value="Dimethylallyltransferase"/>
</dbReference>
<dbReference type="InterPro" id="IPR018022">
    <property type="entry name" value="IPT"/>
</dbReference>
<dbReference type="InterPro" id="IPR027417">
    <property type="entry name" value="P-loop_NTPase"/>
</dbReference>
<dbReference type="NCBIfam" id="TIGR00174">
    <property type="entry name" value="miaA"/>
    <property type="match status" value="1"/>
</dbReference>
<dbReference type="PANTHER" id="PTHR11088">
    <property type="entry name" value="TRNA DIMETHYLALLYLTRANSFERASE"/>
    <property type="match status" value="1"/>
</dbReference>
<dbReference type="PANTHER" id="PTHR11088:SF60">
    <property type="entry name" value="TRNA DIMETHYLALLYLTRANSFERASE"/>
    <property type="match status" value="1"/>
</dbReference>
<dbReference type="Pfam" id="PF01715">
    <property type="entry name" value="IPPT"/>
    <property type="match status" value="1"/>
</dbReference>
<dbReference type="SUPFAM" id="SSF52540">
    <property type="entry name" value="P-loop containing nucleoside triphosphate hydrolases"/>
    <property type="match status" value="1"/>
</dbReference>
<comment type="function">
    <text evidence="1">Catalyzes the transfer of a dimethylallyl group onto the adenine at position 37 in tRNAs that read codons beginning with uridine, leading to the formation of N6-(dimethylallyl)adenosine (i(6)A).</text>
</comment>
<comment type="catalytic activity">
    <reaction evidence="1">
        <text>adenosine(37) in tRNA + dimethylallyl diphosphate = N(6)-dimethylallyladenosine(37) in tRNA + diphosphate</text>
        <dbReference type="Rhea" id="RHEA:26482"/>
        <dbReference type="Rhea" id="RHEA-COMP:10162"/>
        <dbReference type="Rhea" id="RHEA-COMP:10375"/>
        <dbReference type="ChEBI" id="CHEBI:33019"/>
        <dbReference type="ChEBI" id="CHEBI:57623"/>
        <dbReference type="ChEBI" id="CHEBI:74411"/>
        <dbReference type="ChEBI" id="CHEBI:74415"/>
        <dbReference type="EC" id="2.5.1.75"/>
    </reaction>
</comment>
<comment type="cofactor">
    <cofactor evidence="1">
        <name>Mg(2+)</name>
        <dbReference type="ChEBI" id="CHEBI:18420"/>
    </cofactor>
</comment>
<comment type="subunit">
    <text evidence="1">Monomer.</text>
</comment>
<comment type="similarity">
    <text evidence="1">Belongs to the IPP transferase family.</text>
</comment>
<evidence type="ECO:0000255" key="1">
    <source>
        <dbReference type="HAMAP-Rule" id="MF_00185"/>
    </source>
</evidence>
<feature type="chain" id="PRO_0000377254" description="tRNA dimethylallyltransferase">
    <location>
        <begin position="1"/>
        <end position="313"/>
    </location>
</feature>
<feature type="region of interest" description="Interaction with substrate tRNA" evidence="1">
    <location>
        <begin position="37"/>
        <end position="40"/>
    </location>
</feature>
<feature type="region of interest" description="Interaction with substrate tRNA" evidence="1">
    <location>
        <begin position="161"/>
        <end position="165"/>
    </location>
</feature>
<feature type="binding site" evidence="1">
    <location>
        <begin position="12"/>
        <end position="19"/>
    </location>
    <ligand>
        <name>ATP</name>
        <dbReference type="ChEBI" id="CHEBI:30616"/>
    </ligand>
</feature>
<feature type="binding site" evidence="1">
    <location>
        <begin position="14"/>
        <end position="19"/>
    </location>
    <ligand>
        <name>substrate</name>
    </ligand>
</feature>
<feature type="site" description="Interaction with substrate tRNA" evidence="1">
    <location>
        <position position="103"/>
    </location>
</feature>
<feature type="site" description="Interaction with substrate tRNA" evidence="1">
    <location>
        <position position="125"/>
    </location>
</feature>
<protein>
    <recommendedName>
        <fullName evidence="1">tRNA dimethylallyltransferase</fullName>
        <ecNumber evidence="1">2.5.1.75</ecNumber>
    </recommendedName>
    <alternativeName>
        <fullName evidence="1">Dimethylallyl diphosphate:tRNA dimethylallyltransferase</fullName>
        <shortName evidence="1">DMAPP:tRNA dimethylallyltransferase</shortName>
        <shortName evidence="1">DMATase</shortName>
    </alternativeName>
    <alternativeName>
        <fullName evidence="1">Isopentenyl-diphosphate:tRNA isopentenyltransferase</fullName>
        <shortName evidence="1">IPP transferase</shortName>
        <shortName evidence="1">IPPT</shortName>
        <shortName evidence="1">IPTase</shortName>
    </alternativeName>
</protein>
<organism>
    <name type="scientific">Pelagibacter ubique (strain HTCC1062)</name>
    <dbReference type="NCBI Taxonomy" id="335992"/>
    <lineage>
        <taxon>Bacteria</taxon>
        <taxon>Pseudomonadati</taxon>
        <taxon>Pseudomonadota</taxon>
        <taxon>Alphaproteobacteria</taxon>
        <taxon>Candidatus Pelagibacterales</taxon>
        <taxon>Candidatus Pelagibacteraceae</taxon>
        <taxon>Candidatus Pelagibacter</taxon>
    </lineage>
</organism>
<accession>Q4FPN1</accession>
<reference key="1">
    <citation type="journal article" date="2005" name="Science">
        <title>Genome streamlining in a cosmopolitan oceanic bacterium.</title>
        <authorList>
            <person name="Giovannoni S.J."/>
            <person name="Tripp H.J."/>
            <person name="Givan S."/>
            <person name="Podar M."/>
            <person name="Vergin K.L."/>
            <person name="Baptista D."/>
            <person name="Bibbs L."/>
            <person name="Eads J."/>
            <person name="Richardson T.H."/>
            <person name="Noordewier M."/>
            <person name="Rappe M.S."/>
            <person name="Short J.M."/>
            <person name="Carrington J.C."/>
            <person name="Mathur E.J."/>
        </authorList>
    </citation>
    <scope>NUCLEOTIDE SEQUENCE [LARGE SCALE GENOMIC DNA]</scope>
    <source>
        <strain>HTCC1062</strain>
    </source>
</reference>
<proteinExistence type="inferred from homology"/>
<sequence>MDKQSKIILISGPTASGKSNFAVKIAKKIEGEIINADSMQVYKKLKILTARPNKQEQKNIKHHLYGFVDLNEKFSTGQWLELTIKKIENIQKKKKIPILVGGTGLYFQSLINGLVKIPEIPLKFRNKVRLMSKKEGQKKFYKKLLKLDPKIKDKFDPNDTQRSIRAYEIKSYTNISMYDWLAKTKSEFNDSDFLKLHIDTKREKLVEKINLRTSSMLNNGAISEVKKFLKLKIKKDQSVNKVIGIAELTQYLNDEITLDEAEELISIKTRQYAKRQATWARTRMTSWIKVDPIKLDGYIKKLKKSSLKLDQLT</sequence>